<reference key="1">
    <citation type="submission" date="2001-07" db="EMBL/GenBank/DDBJ databases">
        <title>Genome-wide discovery and analysis of human seven transmembrane helix receptor genes.</title>
        <authorList>
            <person name="Suwa M."/>
            <person name="Sato T."/>
            <person name="Okouchi I."/>
            <person name="Arita M."/>
            <person name="Futami K."/>
            <person name="Matsumoto S."/>
            <person name="Tsutsumi S."/>
            <person name="Aburatani H."/>
            <person name="Asai K."/>
            <person name="Akiyama Y."/>
        </authorList>
    </citation>
    <scope>NUCLEOTIDE SEQUENCE [GENOMIC DNA]</scope>
</reference>
<reference key="2">
    <citation type="submission" date="2005-07" db="EMBL/GenBank/DDBJ databases">
        <authorList>
            <person name="Mural R.J."/>
            <person name="Istrail S."/>
            <person name="Sutton G.G."/>
            <person name="Florea L."/>
            <person name="Halpern A.L."/>
            <person name="Mobarry C.M."/>
            <person name="Lippert R."/>
            <person name="Walenz B."/>
            <person name="Shatkay H."/>
            <person name="Dew I."/>
            <person name="Miller J.R."/>
            <person name="Flanigan M.J."/>
            <person name="Edwards N.J."/>
            <person name="Bolanos R."/>
            <person name="Fasulo D."/>
            <person name="Halldorsson B.V."/>
            <person name="Hannenhalli S."/>
            <person name="Turner R."/>
            <person name="Yooseph S."/>
            <person name="Lu F."/>
            <person name="Nusskern D.R."/>
            <person name="Shue B.C."/>
            <person name="Zheng X.H."/>
            <person name="Zhong F."/>
            <person name="Delcher A.L."/>
            <person name="Huson D.H."/>
            <person name="Kravitz S.A."/>
            <person name="Mouchard L."/>
            <person name="Reinert K."/>
            <person name="Remington K.A."/>
            <person name="Clark A.G."/>
            <person name="Waterman M.S."/>
            <person name="Eichler E.E."/>
            <person name="Adams M.D."/>
            <person name="Hunkapiller M.W."/>
            <person name="Myers E.W."/>
            <person name="Venter J.C."/>
        </authorList>
    </citation>
    <scope>NUCLEOTIDE SEQUENCE [LARGE SCALE GENOMIC DNA]</scope>
</reference>
<reference key="3">
    <citation type="journal article" date="2004" name="Genome Res.">
        <title>The status, quality, and expansion of the NIH full-length cDNA project: the Mammalian Gene Collection (MGC).</title>
        <authorList>
            <consortium name="The MGC Project Team"/>
        </authorList>
    </citation>
    <scope>NUCLEOTIDE SEQUENCE [LARGE SCALE MRNA]</scope>
    <scope>VARIANT ASN-183</scope>
    <source>
        <tissue>Testis</tissue>
    </source>
</reference>
<reference key="4">
    <citation type="journal article" date="2002" name="Genomics">
        <title>DEFOG: a practical scheme for deciphering families of genes.</title>
        <authorList>
            <person name="Fuchs T."/>
            <person name="Malecova B."/>
            <person name="Linhart C."/>
            <person name="Sharan R."/>
            <person name="Khen M."/>
            <person name="Herwig R."/>
            <person name="Shmulevich D."/>
            <person name="Elkon R."/>
            <person name="Steinfath M."/>
            <person name="O'Brien J.K."/>
            <person name="Radelof U."/>
            <person name="Lehrach H."/>
            <person name="Lancet D."/>
            <person name="Shamir R."/>
        </authorList>
    </citation>
    <scope>NUCLEOTIDE SEQUENCE [GENOMIC DNA] OF 71-286</scope>
</reference>
<reference key="5">
    <citation type="journal article" date="2004" name="Proc. Natl. Acad. Sci. U.S.A.">
        <title>The human olfactory receptor gene family.</title>
        <authorList>
            <person name="Malnic B."/>
            <person name="Godfrey P.A."/>
            <person name="Buck L.B."/>
        </authorList>
    </citation>
    <scope>IDENTIFICATION</scope>
</reference>
<reference key="6">
    <citation type="journal article" date="2004" name="Proc. Natl. Acad. Sci. U.S.A.">
        <authorList>
            <person name="Malnic B."/>
            <person name="Godfrey P.A."/>
            <person name="Buck L.B."/>
        </authorList>
    </citation>
    <scope>ERRATUM OF PUBMED:14983052</scope>
</reference>
<feature type="chain" id="PRO_0000150572" description="Olfactory receptor 5A1">
    <location>
        <begin position="1"/>
        <end position="315"/>
    </location>
</feature>
<feature type="topological domain" description="Extracellular" evidence="1">
    <location>
        <begin position="1"/>
        <end position="28"/>
    </location>
</feature>
<feature type="transmembrane region" description="Helical; Name=1" evidence="1">
    <location>
        <begin position="29"/>
        <end position="52"/>
    </location>
</feature>
<feature type="topological domain" description="Cytoplasmic" evidence="1">
    <location>
        <begin position="53"/>
        <end position="60"/>
    </location>
</feature>
<feature type="transmembrane region" description="Helical; Name=2" evidence="1">
    <location>
        <begin position="61"/>
        <end position="82"/>
    </location>
</feature>
<feature type="topological domain" description="Extracellular" evidence="1">
    <location>
        <begin position="83"/>
        <end position="103"/>
    </location>
</feature>
<feature type="transmembrane region" description="Helical; Name=3" evidence="1">
    <location>
        <begin position="104"/>
        <end position="123"/>
    </location>
</feature>
<feature type="topological domain" description="Cytoplasmic" evidence="1">
    <location>
        <begin position="124"/>
        <end position="142"/>
    </location>
</feature>
<feature type="transmembrane region" description="Helical; Name=4" evidence="1">
    <location>
        <begin position="143"/>
        <end position="161"/>
    </location>
</feature>
<feature type="topological domain" description="Extracellular" evidence="1">
    <location>
        <begin position="162"/>
        <end position="198"/>
    </location>
</feature>
<feature type="transmembrane region" description="Helical; Name=5" evidence="1">
    <location>
        <begin position="199"/>
        <end position="222"/>
    </location>
</feature>
<feature type="topological domain" description="Cytoplasmic" evidence="1">
    <location>
        <begin position="223"/>
        <end position="239"/>
    </location>
</feature>
<feature type="transmembrane region" description="Helical; Name=6" evidence="1">
    <location>
        <begin position="240"/>
        <end position="262"/>
    </location>
</feature>
<feature type="topological domain" description="Extracellular" evidence="1">
    <location>
        <begin position="263"/>
        <end position="275"/>
    </location>
</feature>
<feature type="transmembrane region" description="Helical; Name=7" evidence="1">
    <location>
        <begin position="276"/>
        <end position="295"/>
    </location>
</feature>
<feature type="topological domain" description="Cytoplasmic" evidence="1">
    <location>
        <begin position="296"/>
        <end position="315"/>
    </location>
</feature>
<feature type="glycosylation site" description="N-linked (GlcNAc...) asparagine" evidence="1">
    <location>
        <position position="8"/>
    </location>
</feature>
<feature type="disulfide bond" evidence="2">
    <location>
        <begin position="100"/>
        <end position="192"/>
    </location>
</feature>
<feature type="sequence variant" id="VAR_034213" description="In dbSNP:rs17153732.">
    <original>I</original>
    <variation>V</variation>
    <location>
        <position position="52"/>
    </location>
</feature>
<feature type="sequence variant" id="VAR_024096" description="In dbSNP:rs6591536." evidence="3">
    <original>D</original>
    <variation>N</variation>
    <location>
        <position position="183"/>
    </location>
</feature>
<name>OR5A1_HUMAN</name>
<comment type="function">
    <text evidence="4">Odorant receptor.</text>
</comment>
<comment type="subcellular location">
    <subcellularLocation>
        <location>Cell membrane</location>
        <topology>Multi-pass membrane protein</topology>
    </subcellularLocation>
</comment>
<comment type="similarity">
    <text evidence="2">Belongs to the G-protein coupled receptor 1 family.</text>
</comment>
<comment type="online information" name="Human Olfactory Receptor Data Exploratorium (HORDE)">
    <link uri="http://genome.weizmann.ac.il/horde/card/index/symbol:OR5A1"/>
</comment>
<sequence>MSITKAWNSSSVTMFILLGFTDHPELQALLFVTFLGIYLTTLAWNLALIFLIRGDTHLHTPMYFFLSNLSFIDICYSSAVAPNMLTDFFWEQKTISFVGCAAQFFFFVGMGLSECLLLTAMAYDRYAAISSPLLYPTIMTQGLCTRMVVGAYVGGFLSSLIQASSIFRLHFCGPNIINHFFCDLPPVLALSCSDTFLSQVVNFLVVVTVGGTSFLQLLISYGYIVSAVLKIPSAEGRWKACNTCASHLMVVTLLFGTALFVYLRPSSSYLLGRDKVVSVFYSLVIPMLNPLIYSLRNKEIKDALWKVLERKKVFS</sequence>
<evidence type="ECO:0000255" key="1"/>
<evidence type="ECO:0000255" key="2">
    <source>
        <dbReference type="PROSITE-ProRule" id="PRU00521"/>
    </source>
</evidence>
<evidence type="ECO:0000269" key="3">
    <source>
    </source>
</evidence>
<evidence type="ECO:0000305" key="4"/>
<organism>
    <name type="scientific">Homo sapiens</name>
    <name type="common">Human</name>
    <dbReference type="NCBI Taxonomy" id="9606"/>
    <lineage>
        <taxon>Eukaryota</taxon>
        <taxon>Metazoa</taxon>
        <taxon>Chordata</taxon>
        <taxon>Craniata</taxon>
        <taxon>Vertebrata</taxon>
        <taxon>Euteleostomi</taxon>
        <taxon>Mammalia</taxon>
        <taxon>Eutheria</taxon>
        <taxon>Euarchontoglires</taxon>
        <taxon>Primates</taxon>
        <taxon>Haplorrhini</taxon>
        <taxon>Catarrhini</taxon>
        <taxon>Hominidae</taxon>
        <taxon>Homo</taxon>
    </lineage>
</organism>
<protein>
    <recommendedName>
        <fullName>Olfactory receptor 5A1</fullName>
    </recommendedName>
    <alternativeName>
        <fullName>OST181</fullName>
    </alternativeName>
    <alternativeName>
        <fullName>Olfactory receptor OR11-249</fullName>
    </alternativeName>
</protein>
<proteinExistence type="evidence at transcript level"/>
<accession>Q8NGJ0</accession>
<accession>B9EH58</accession>
<accession>Q6IFF2</accession>
<accession>Q96RB1</accession>
<keyword id="KW-1003">Cell membrane</keyword>
<keyword id="KW-1015">Disulfide bond</keyword>
<keyword id="KW-0297">G-protein coupled receptor</keyword>
<keyword id="KW-0325">Glycoprotein</keyword>
<keyword id="KW-0472">Membrane</keyword>
<keyword id="KW-0552">Olfaction</keyword>
<keyword id="KW-0675">Receptor</keyword>
<keyword id="KW-1185">Reference proteome</keyword>
<keyword id="KW-0716">Sensory transduction</keyword>
<keyword id="KW-0807">Transducer</keyword>
<keyword id="KW-0812">Transmembrane</keyword>
<keyword id="KW-1133">Transmembrane helix</keyword>
<gene>
    <name type="primary">OR5A1</name>
    <name type="synonym">OR5A1P</name>
</gene>
<dbReference type="EMBL" id="AB065804">
    <property type="protein sequence ID" value="BAC06023.1"/>
    <property type="molecule type" value="Genomic_DNA"/>
</dbReference>
<dbReference type="EMBL" id="CH471076">
    <property type="protein sequence ID" value="EAW73844.1"/>
    <property type="molecule type" value="Genomic_DNA"/>
</dbReference>
<dbReference type="EMBL" id="BC137060">
    <property type="protein sequence ID" value="AAI37061.1"/>
    <property type="molecule type" value="mRNA"/>
</dbReference>
<dbReference type="EMBL" id="BC137061">
    <property type="protein sequence ID" value="AAI37062.1"/>
    <property type="molecule type" value="mRNA"/>
</dbReference>
<dbReference type="EMBL" id="AF399528">
    <property type="protein sequence ID" value="AAK95013.1"/>
    <property type="molecule type" value="Genomic_DNA"/>
</dbReference>
<dbReference type="EMBL" id="BK004310">
    <property type="protein sequence ID" value="DAA04708.1"/>
    <property type="molecule type" value="Genomic_DNA"/>
</dbReference>
<dbReference type="CCDS" id="CCDS31561.1"/>
<dbReference type="RefSeq" id="NP_001004728.1">
    <property type="nucleotide sequence ID" value="NM_001004728.2"/>
</dbReference>
<dbReference type="SMR" id="Q8NGJ0"/>
<dbReference type="FunCoup" id="Q8NGJ0">
    <property type="interactions" value="417"/>
</dbReference>
<dbReference type="IntAct" id="Q8NGJ0">
    <property type="interactions" value="1"/>
</dbReference>
<dbReference type="STRING" id="9606.ENSP00000493195"/>
<dbReference type="GlyCosmos" id="Q8NGJ0">
    <property type="glycosylation" value="1 site, No reported glycans"/>
</dbReference>
<dbReference type="GlyGen" id="Q8NGJ0">
    <property type="glycosylation" value="1 site"/>
</dbReference>
<dbReference type="iPTMnet" id="Q8NGJ0"/>
<dbReference type="PhosphoSitePlus" id="Q8NGJ0"/>
<dbReference type="BioMuta" id="OR5A1"/>
<dbReference type="DMDM" id="38372702"/>
<dbReference type="MassIVE" id="Q8NGJ0"/>
<dbReference type="PaxDb" id="9606-ENSP00000303096"/>
<dbReference type="ProteomicsDB" id="73526"/>
<dbReference type="Antibodypedia" id="58822">
    <property type="antibodies" value="41 antibodies from 16 providers"/>
</dbReference>
<dbReference type="DNASU" id="219982"/>
<dbReference type="Ensembl" id="ENST00000641045.1">
    <property type="protein sequence ID" value="ENSP00000493195.1"/>
    <property type="gene ID" value="ENSG00000172320.4"/>
</dbReference>
<dbReference type="GeneID" id="219982"/>
<dbReference type="KEGG" id="hsa:219982"/>
<dbReference type="MANE-Select" id="ENST00000641045.1">
    <property type="protein sequence ID" value="ENSP00000493195.1"/>
    <property type="RefSeq nucleotide sequence ID" value="NM_001004728.2"/>
    <property type="RefSeq protein sequence ID" value="NP_001004728.1"/>
</dbReference>
<dbReference type="UCSC" id="uc001nnx.2">
    <property type="organism name" value="human"/>
</dbReference>
<dbReference type="AGR" id="HGNC:8319"/>
<dbReference type="CTD" id="219982"/>
<dbReference type="DisGeNET" id="219982"/>
<dbReference type="GeneCards" id="OR5A1"/>
<dbReference type="HGNC" id="HGNC:8319">
    <property type="gene designation" value="OR5A1"/>
</dbReference>
<dbReference type="HPA" id="ENSG00000172320">
    <property type="expression patterns" value="Not detected"/>
</dbReference>
<dbReference type="neXtProt" id="NX_Q8NGJ0"/>
<dbReference type="PharmGKB" id="PA32454"/>
<dbReference type="VEuPathDB" id="HostDB:ENSG00000172320"/>
<dbReference type="eggNOG" id="ENOG502SMFV">
    <property type="taxonomic scope" value="Eukaryota"/>
</dbReference>
<dbReference type="GeneTree" id="ENSGT01130000278279"/>
<dbReference type="HOGENOM" id="CLU_012526_1_0_1"/>
<dbReference type="InParanoid" id="Q8NGJ0"/>
<dbReference type="OMA" id="MLTDFFQ"/>
<dbReference type="OrthoDB" id="9895897at2759"/>
<dbReference type="PAN-GO" id="Q8NGJ0">
    <property type="GO annotations" value="2 GO annotations based on evolutionary models"/>
</dbReference>
<dbReference type="PhylomeDB" id="Q8NGJ0"/>
<dbReference type="TreeFam" id="TF352753"/>
<dbReference type="PathwayCommons" id="Q8NGJ0"/>
<dbReference type="Reactome" id="R-HSA-9752946">
    <property type="pathway name" value="Expression and translocation of olfactory receptors"/>
</dbReference>
<dbReference type="SignaLink" id="Q8NGJ0"/>
<dbReference type="BioGRID-ORCS" id="219982">
    <property type="hits" value="22 hits in 741 CRISPR screens"/>
</dbReference>
<dbReference type="GeneWiki" id="OR5A1"/>
<dbReference type="GenomeRNAi" id="219982"/>
<dbReference type="Pharos" id="Q8NGJ0">
    <property type="development level" value="Tdark"/>
</dbReference>
<dbReference type="PRO" id="PR:Q8NGJ0"/>
<dbReference type="Proteomes" id="UP000005640">
    <property type="component" value="Chromosome 11"/>
</dbReference>
<dbReference type="RNAct" id="Q8NGJ0">
    <property type="molecule type" value="protein"/>
</dbReference>
<dbReference type="Bgee" id="ENSG00000172320">
    <property type="expression patterns" value="Expressed in male germ line stem cell (sensu Vertebrata) in testis"/>
</dbReference>
<dbReference type="GO" id="GO:0005886">
    <property type="term" value="C:plasma membrane"/>
    <property type="evidence" value="ECO:0007669"/>
    <property type="project" value="UniProtKB-SubCell"/>
</dbReference>
<dbReference type="GO" id="GO:0004930">
    <property type="term" value="F:G protein-coupled receptor activity"/>
    <property type="evidence" value="ECO:0007669"/>
    <property type="project" value="UniProtKB-KW"/>
</dbReference>
<dbReference type="GO" id="GO:0005549">
    <property type="term" value="F:odorant binding"/>
    <property type="evidence" value="ECO:0000318"/>
    <property type="project" value="GO_Central"/>
</dbReference>
<dbReference type="GO" id="GO:0004984">
    <property type="term" value="F:olfactory receptor activity"/>
    <property type="evidence" value="ECO:0000318"/>
    <property type="project" value="GO_Central"/>
</dbReference>
<dbReference type="CDD" id="cd15417">
    <property type="entry name" value="7tmA_OR5A1-like"/>
    <property type="match status" value="1"/>
</dbReference>
<dbReference type="FunFam" id="1.20.1070.10:FF:000003">
    <property type="entry name" value="Olfactory receptor"/>
    <property type="match status" value="1"/>
</dbReference>
<dbReference type="Gene3D" id="1.20.1070.10">
    <property type="entry name" value="Rhodopsin 7-helix transmembrane proteins"/>
    <property type="match status" value="1"/>
</dbReference>
<dbReference type="InterPro" id="IPR000276">
    <property type="entry name" value="GPCR_Rhodpsn"/>
</dbReference>
<dbReference type="InterPro" id="IPR017452">
    <property type="entry name" value="GPCR_Rhodpsn_7TM"/>
</dbReference>
<dbReference type="InterPro" id="IPR000725">
    <property type="entry name" value="Olfact_rcpt"/>
</dbReference>
<dbReference type="InterPro" id="IPR050516">
    <property type="entry name" value="Olfactory_GPCR"/>
</dbReference>
<dbReference type="PANTHER" id="PTHR26452">
    <property type="entry name" value="OLFACTORY RECEPTOR"/>
    <property type="match status" value="1"/>
</dbReference>
<dbReference type="Pfam" id="PF13853">
    <property type="entry name" value="7tm_4"/>
    <property type="match status" value="1"/>
</dbReference>
<dbReference type="PRINTS" id="PR00237">
    <property type="entry name" value="GPCRRHODOPSN"/>
</dbReference>
<dbReference type="PRINTS" id="PR00245">
    <property type="entry name" value="OLFACTORYR"/>
</dbReference>
<dbReference type="SUPFAM" id="SSF81321">
    <property type="entry name" value="Family A G protein-coupled receptor-like"/>
    <property type="match status" value="1"/>
</dbReference>
<dbReference type="PROSITE" id="PS00237">
    <property type="entry name" value="G_PROTEIN_RECEP_F1_1"/>
    <property type="match status" value="1"/>
</dbReference>
<dbReference type="PROSITE" id="PS50262">
    <property type="entry name" value="G_PROTEIN_RECEP_F1_2"/>
    <property type="match status" value="1"/>
</dbReference>